<accession>Q03F56</accession>
<dbReference type="EC" id="3.1.21.2" evidence="1"/>
<dbReference type="EMBL" id="CP000422">
    <property type="protein sequence ID" value="ABJ68166.1"/>
    <property type="molecule type" value="Genomic_DNA"/>
</dbReference>
<dbReference type="RefSeq" id="WP_011673496.1">
    <property type="nucleotide sequence ID" value="NC_008525.1"/>
</dbReference>
<dbReference type="SMR" id="Q03F56"/>
<dbReference type="STRING" id="278197.PEPE_1111"/>
<dbReference type="GeneID" id="33062671"/>
<dbReference type="KEGG" id="ppe:PEPE_1111"/>
<dbReference type="eggNOG" id="COG0648">
    <property type="taxonomic scope" value="Bacteria"/>
</dbReference>
<dbReference type="HOGENOM" id="CLU_025885_4_1_9"/>
<dbReference type="OrthoDB" id="9805666at2"/>
<dbReference type="Proteomes" id="UP000000773">
    <property type="component" value="Chromosome"/>
</dbReference>
<dbReference type="GO" id="GO:0008833">
    <property type="term" value="F:deoxyribonuclease IV (phage-T4-induced) activity"/>
    <property type="evidence" value="ECO:0007669"/>
    <property type="project" value="UniProtKB-UniRule"/>
</dbReference>
<dbReference type="GO" id="GO:0003677">
    <property type="term" value="F:DNA binding"/>
    <property type="evidence" value="ECO:0007669"/>
    <property type="project" value="InterPro"/>
</dbReference>
<dbReference type="GO" id="GO:0003906">
    <property type="term" value="F:DNA-(apurinic or apyrimidinic site) endonuclease activity"/>
    <property type="evidence" value="ECO:0007669"/>
    <property type="project" value="TreeGrafter"/>
</dbReference>
<dbReference type="GO" id="GO:0008081">
    <property type="term" value="F:phosphoric diester hydrolase activity"/>
    <property type="evidence" value="ECO:0007669"/>
    <property type="project" value="TreeGrafter"/>
</dbReference>
<dbReference type="GO" id="GO:0008270">
    <property type="term" value="F:zinc ion binding"/>
    <property type="evidence" value="ECO:0007669"/>
    <property type="project" value="UniProtKB-UniRule"/>
</dbReference>
<dbReference type="GO" id="GO:0006284">
    <property type="term" value="P:base-excision repair"/>
    <property type="evidence" value="ECO:0007669"/>
    <property type="project" value="TreeGrafter"/>
</dbReference>
<dbReference type="CDD" id="cd00019">
    <property type="entry name" value="AP2Ec"/>
    <property type="match status" value="1"/>
</dbReference>
<dbReference type="FunFam" id="3.20.20.150:FF:000001">
    <property type="entry name" value="Probable endonuclease 4"/>
    <property type="match status" value="1"/>
</dbReference>
<dbReference type="Gene3D" id="3.20.20.150">
    <property type="entry name" value="Divalent-metal-dependent TIM barrel enzymes"/>
    <property type="match status" value="1"/>
</dbReference>
<dbReference type="HAMAP" id="MF_00152">
    <property type="entry name" value="Nfo"/>
    <property type="match status" value="1"/>
</dbReference>
<dbReference type="InterPro" id="IPR001719">
    <property type="entry name" value="AP_endonuc_2"/>
</dbReference>
<dbReference type="InterPro" id="IPR018246">
    <property type="entry name" value="AP_endonuc_F2_Zn_BS"/>
</dbReference>
<dbReference type="InterPro" id="IPR036237">
    <property type="entry name" value="Xyl_isomerase-like_sf"/>
</dbReference>
<dbReference type="InterPro" id="IPR013022">
    <property type="entry name" value="Xyl_isomerase-like_TIM-brl"/>
</dbReference>
<dbReference type="NCBIfam" id="TIGR00587">
    <property type="entry name" value="nfo"/>
    <property type="match status" value="1"/>
</dbReference>
<dbReference type="NCBIfam" id="NF002196">
    <property type="entry name" value="PRK01060.1-1"/>
    <property type="match status" value="1"/>
</dbReference>
<dbReference type="PANTHER" id="PTHR21445:SF0">
    <property type="entry name" value="APURINIC-APYRIMIDINIC ENDONUCLEASE"/>
    <property type="match status" value="1"/>
</dbReference>
<dbReference type="PANTHER" id="PTHR21445">
    <property type="entry name" value="ENDONUCLEASE IV ENDODEOXYRIBONUCLEASE IV"/>
    <property type="match status" value="1"/>
</dbReference>
<dbReference type="Pfam" id="PF01261">
    <property type="entry name" value="AP_endonuc_2"/>
    <property type="match status" value="1"/>
</dbReference>
<dbReference type="SMART" id="SM00518">
    <property type="entry name" value="AP2Ec"/>
    <property type="match status" value="1"/>
</dbReference>
<dbReference type="SUPFAM" id="SSF51658">
    <property type="entry name" value="Xylose isomerase-like"/>
    <property type="match status" value="1"/>
</dbReference>
<dbReference type="PROSITE" id="PS00730">
    <property type="entry name" value="AP_NUCLEASE_F2_2"/>
    <property type="match status" value="1"/>
</dbReference>
<dbReference type="PROSITE" id="PS00731">
    <property type="entry name" value="AP_NUCLEASE_F2_3"/>
    <property type="match status" value="1"/>
</dbReference>
<dbReference type="PROSITE" id="PS51432">
    <property type="entry name" value="AP_NUCLEASE_F2_4"/>
    <property type="match status" value="1"/>
</dbReference>
<protein>
    <recommendedName>
        <fullName evidence="1">Probable endonuclease 4</fullName>
        <ecNumber evidence="1">3.1.21.2</ecNumber>
    </recommendedName>
    <alternativeName>
        <fullName evidence="1">Endodeoxyribonuclease IV</fullName>
    </alternativeName>
    <alternativeName>
        <fullName evidence="1">Endonuclease IV</fullName>
    </alternativeName>
</protein>
<gene>
    <name evidence="1" type="primary">nfo</name>
    <name type="ordered locus">PEPE_1111</name>
</gene>
<proteinExistence type="inferred from homology"/>
<keyword id="KW-0227">DNA damage</keyword>
<keyword id="KW-0234">DNA repair</keyword>
<keyword id="KW-0255">Endonuclease</keyword>
<keyword id="KW-0378">Hydrolase</keyword>
<keyword id="KW-0479">Metal-binding</keyword>
<keyword id="KW-0540">Nuclease</keyword>
<keyword id="KW-0862">Zinc</keyword>
<feature type="chain" id="PRO_1000011328" description="Probable endonuclease 4">
    <location>
        <begin position="1"/>
        <end position="296"/>
    </location>
</feature>
<feature type="binding site" evidence="1">
    <location>
        <position position="68"/>
    </location>
    <ligand>
        <name>Zn(2+)</name>
        <dbReference type="ChEBI" id="CHEBI:29105"/>
        <label>1</label>
    </ligand>
</feature>
<feature type="binding site" evidence="1">
    <location>
        <position position="109"/>
    </location>
    <ligand>
        <name>Zn(2+)</name>
        <dbReference type="ChEBI" id="CHEBI:29105"/>
        <label>1</label>
    </ligand>
</feature>
<feature type="binding site" evidence="1">
    <location>
        <position position="144"/>
    </location>
    <ligand>
        <name>Zn(2+)</name>
        <dbReference type="ChEBI" id="CHEBI:29105"/>
        <label>1</label>
    </ligand>
</feature>
<feature type="binding site" evidence="1">
    <location>
        <position position="144"/>
    </location>
    <ligand>
        <name>Zn(2+)</name>
        <dbReference type="ChEBI" id="CHEBI:29105"/>
        <label>2</label>
    </ligand>
</feature>
<feature type="binding site" evidence="1">
    <location>
        <position position="178"/>
    </location>
    <ligand>
        <name>Zn(2+)</name>
        <dbReference type="ChEBI" id="CHEBI:29105"/>
        <label>2</label>
    </ligand>
</feature>
<feature type="binding site" evidence="1">
    <location>
        <position position="181"/>
    </location>
    <ligand>
        <name>Zn(2+)</name>
        <dbReference type="ChEBI" id="CHEBI:29105"/>
        <label>3</label>
    </ligand>
</feature>
<feature type="binding site" evidence="1">
    <location>
        <position position="213"/>
    </location>
    <ligand>
        <name>Zn(2+)</name>
        <dbReference type="ChEBI" id="CHEBI:29105"/>
        <label>2</label>
    </ligand>
</feature>
<feature type="binding site" evidence="1">
    <location>
        <position position="226"/>
    </location>
    <ligand>
        <name>Zn(2+)</name>
        <dbReference type="ChEBI" id="CHEBI:29105"/>
        <label>3</label>
    </ligand>
</feature>
<feature type="binding site" evidence="1">
    <location>
        <position position="228"/>
    </location>
    <ligand>
        <name>Zn(2+)</name>
        <dbReference type="ChEBI" id="CHEBI:29105"/>
        <label>3</label>
    </ligand>
</feature>
<feature type="binding site" evidence="1">
    <location>
        <position position="258"/>
    </location>
    <ligand>
        <name>Zn(2+)</name>
        <dbReference type="ChEBI" id="CHEBI:29105"/>
        <label>2</label>
    </ligand>
</feature>
<reference key="1">
    <citation type="journal article" date="2006" name="Proc. Natl. Acad. Sci. U.S.A.">
        <title>Comparative genomics of the lactic acid bacteria.</title>
        <authorList>
            <person name="Makarova K.S."/>
            <person name="Slesarev A."/>
            <person name="Wolf Y.I."/>
            <person name="Sorokin A."/>
            <person name="Mirkin B."/>
            <person name="Koonin E.V."/>
            <person name="Pavlov A."/>
            <person name="Pavlova N."/>
            <person name="Karamychev V."/>
            <person name="Polouchine N."/>
            <person name="Shakhova V."/>
            <person name="Grigoriev I."/>
            <person name="Lou Y."/>
            <person name="Rohksar D."/>
            <person name="Lucas S."/>
            <person name="Huang K."/>
            <person name="Goodstein D.M."/>
            <person name="Hawkins T."/>
            <person name="Plengvidhya V."/>
            <person name="Welker D."/>
            <person name="Hughes J."/>
            <person name="Goh Y."/>
            <person name="Benson A."/>
            <person name="Baldwin K."/>
            <person name="Lee J.-H."/>
            <person name="Diaz-Muniz I."/>
            <person name="Dosti B."/>
            <person name="Smeianov V."/>
            <person name="Wechter W."/>
            <person name="Barabote R."/>
            <person name="Lorca G."/>
            <person name="Altermann E."/>
            <person name="Barrangou R."/>
            <person name="Ganesan B."/>
            <person name="Xie Y."/>
            <person name="Rawsthorne H."/>
            <person name="Tamir D."/>
            <person name="Parker C."/>
            <person name="Breidt F."/>
            <person name="Broadbent J.R."/>
            <person name="Hutkins R."/>
            <person name="O'Sullivan D."/>
            <person name="Steele J."/>
            <person name="Unlu G."/>
            <person name="Saier M.H. Jr."/>
            <person name="Klaenhammer T."/>
            <person name="Richardson P."/>
            <person name="Kozyavkin S."/>
            <person name="Weimer B.C."/>
            <person name="Mills D.A."/>
        </authorList>
    </citation>
    <scope>NUCLEOTIDE SEQUENCE [LARGE SCALE GENOMIC DNA]</scope>
    <source>
        <strain>ATCC 25745 / CCUG 21536 / LMG 10740 / 183-1w</strain>
    </source>
</reference>
<organism>
    <name type="scientific">Pediococcus pentosaceus (strain ATCC 25745 / CCUG 21536 / LMG 10740 / 183-1w)</name>
    <dbReference type="NCBI Taxonomy" id="278197"/>
    <lineage>
        <taxon>Bacteria</taxon>
        <taxon>Bacillati</taxon>
        <taxon>Bacillota</taxon>
        <taxon>Bacilli</taxon>
        <taxon>Lactobacillales</taxon>
        <taxon>Lactobacillaceae</taxon>
        <taxon>Pediococcus</taxon>
    </lineage>
</organism>
<sequence length="296" mass="32809">MIIGSHVSMSGRKMFLGSVETSIENGANALMIYTGAPQNTRRKAIEDLRIPEGRALLTEHDFKDVVVHAPYIVNLGNTFKPESFKFAVEFLKEEVKRADALGASQLVLHPGSHVGAGPDAAIASITEGLNQIITPEQNVKIALETMAGKGTEVATNFEQIQQIITGVEHNEKLSVCFDTCHTNDAGYDVKNHFDDVMDEFDQIIGLQKIGVIHLNDSKNEMGSHKDRHENLGFGTIGFKALHYIANFDKFQNVPKILETPWVKDPDAKKHSPYQLELAMLKSGRFDDTLIEKIINN</sequence>
<comment type="function">
    <text evidence="1">Endonuclease IV plays a role in DNA repair. It cleaves phosphodiester bonds at apurinic or apyrimidinic (AP) sites, generating a 3'-hydroxyl group and a 5'-terminal sugar phosphate.</text>
</comment>
<comment type="catalytic activity">
    <reaction evidence="1">
        <text>Endonucleolytic cleavage to 5'-phosphooligonucleotide end-products.</text>
        <dbReference type="EC" id="3.1.21.2"/>
    </reaction>
</comment>
<comment type="cofactor">
    <cofactor evidence="1">
        <name>Zn(2+)</name>
        <dbReference type="ChEBI" id="CHEBI:29105"/>
    </cofactor>
    <text evidence="1">Binds 3 Zn(2+) ions.</text>
</comment>
<comment type="similarity">
    <text evidence="1">Belongs to the AP endonuclease 2 family.</text>
</comment>
<name>END4_PEDPA</name>
<evidence type="ECO:0000255" key="1">
    <source>
        <dbReference type="HAMAP-Rule" id="MF_00152"/>
    </source>
</evidence>